<keyword id="KW-0067">ATP-binding</keyword>
<keyword id="KW-0963">Cytoplasm</keyword>
<keyword id="KW-0227">DNA damage</keyword>
<keyword id="KW-0233">DNA recombination</keyword>
<keyword id="KW-0234">DNA repair</keyword>
<keyword id="KW-0238">DNA-binding</keyword>
<keyword id="KW-0378">Hydrolase</keyword>
<keyword id="KW-0547">Nucleotide-binding</keyword>
<organism>
    <name type="scientific">Lacticaseibacillus casei (strain BL23)</name>
    <name type="common">Lactobacillus casei</name>
    <dbReference type="NCBI Taxonomy" id="543734"/>
    <lineage>
        <taxon>Bacteria</taxon>
        <taxon>Bacillati</taxon>
        <taxon>Bacillota</taxon>
        <taxon>Bacilli</taxon>
        <taxon>Lactobacillales</taxon>
        <taxon>Lactobacillaceae</taxon>
        <taxon>Lacticaseibacillus</taxon>
    </lineage>
</organism>
<protein>
    <recommendedName>
        <fullName evidence="1">Holliday junction branch migration complex subunit RuvB</fullName>
        <ecNumber evidence="1">3.6.4.-</ecNumber>
    </recommendedName>
</protein>
<evidence type="ECO:0000255" key="1">
    <source>
        <dbReference type="HAMAP-Rule" id="MF_00016"/>
    </source>
</evidence>
<name>RUVB_LACCB</name>
<comment type="function">
    <text evidence="1">The RuvA-RuvB-RuvC complex processes Holliday junction (HJ) DNA during genetic recombination and DNA repair, while the RuvA-RuvB complex plays an important role in the rescue of blocked DNA replication forks via replication fork reversal (RFR). RuvA specifically binds to HJ cruciform DNA, conferring on it an open structure. The RuvB hexamer acts as an ATP-dependent pump, pulling dsDNA into and through the RuvAB complex. RuvB forms 2 homohexamers on either side of HJ DNA bound by 1 or 2 RuvA tetramers; 4 subunits per hexamer contact DNA at a time. Coordinated motions by a converter formed by DNA-disengaged RuvB subunits stimulates ATP hydrolysis and nucleotide exchange. Immobilization of the converter enables RuvB to convert the ATP-contained energy into a lever motion, pulling 2 nucleotides of DNA out of the RuvA tetramer per ATP hydrolyzed, thus driving DNA branch migration. The RuvB motors rotate together with the DNA substrate, which together with the progressing nucleotide cycle form the mechanistic basis for DNA recombination by continuous HJ branch migration. Branch migration allows RuvC to scan DNA until it finds its consensus sequence, where it cleaves and resolves cruciform DNA.</text>
</comment>
<comment type="catalytic activity">
    <reaction evidence="1">
        <text>ATP + H2O = ADP + phosphate + H(+)</text>
        <dbReference type="Rhea" id="RHEA:13065"/>
        <dbReference type="ChEBI" id="CHEBI:15377"/>
        <dbReference type="ChEBI" id="CHEBI:15378"/>
        <dbReference type="ChEBI" id="CHEBI:30616"/>
        <dbReference type="ChEBI" id="CHEBI:43474"/>
        <dbReference type="ChEBI" id="CHEBI:456216"/>
    </reaction>
</comment>
<comment type="subunit">
    <text evidence="1">Homohexamer. Forms an RuvA(8)-RuvB(12)-Holliday junction (HJ) complex. HJ DNA is sandwiched between 2 RuvA tetramers; dsDNA enters through RuvA and exits via RuvB. An RuvB hexamer assembles on each DNA strand where it exits the tetramer. Each RuvB hexamer is contacted by two RuvA subunits (via domain III) on 2 adjacent RuvB subunits; this complex drives branch migration. In the full resolvosome a probable DNA-RuvA(4)-RuvB(12)-RuvC(2) complex forms which resolves the HJ.</text>
</comment>
<comment type="subcellular location">
    <subcellularLocation>
        <location evidence="1">Cytoplasm</location>
    </subcellularLocation>
</comment>
<comment type="domain">
    <text evidence="1">Has 3 domains, the large (RuvB-L) and small ATPase (RuvB-S) domains and the C-terminal head (RuvB-H) domain. The head domain binds DNA, while the ATPase domains jointly bind ATP, ADP or are empty depending on the state of the subunit in the translocation cycle. During a single DNA translocation step the structure of each domain remains the same, but their relative positions change.</text>
</comment>
<comment type="similarity">
    <text evidence="1">Belongs to the RuvB family.</text>
</comment>
<gene>
    <name evidence="1" type="primary">ruvB</name>
    <name type="ordered locus">LCABL_08340</name>
</gene>
<dbReference type="EC" id="3.6.4.-" evidence="1"/>
<dbReference type="EMBL" id="FM177140">
    <property type="protein sequence ID" value="CAQ65957.1"/>
    <property type="molecule type" value="Genomic_DNA"/>
</dbReference>
<dbReference type="SMR" id="B3WC56"/>
<dbReference type="KEGG" id="lcb:LCABL_08340"/>
<dbReference type="HOGENOM" id="CLU_055599_1_0_9"/>
<dbReference type="GO" id="GO:0005737">
    <property type="term" value="C:cytoplasm"/>
    <property type="evidence" value="ECO:0007669"/>
    <property type="project" value="UniProtKB-SubCell"/>
</dbReference>
<dbReference type="GO" id="GO:0048476">
    <property type="term" value="C:Holliday junction resolvase complex"/>
    <property type="evidence" value="ECO:0007669"/>
    <property type="project" value="UniProtKB-UniRule"/>
</dbReference>
<dbReference type="GO" id="GO:0005524">
    <property type="term" value="F:ATP binding"/>
    <property type="evidence" value="ECO:0007669"/>
    <property type="project" value="UniProtKB-UniRule"/>
</dbReference>
<dbReference type="GO" id="GO:0016887">
    <property type="term" value="F:ATP hydrolysis activity"/>
    <property type="evidence" value="ECO:0007669"/>
    <property type="project" value="InterPro"/>
</dbReference>
<dbReference type="GO" id="GO:0000400">
    <property type="term" value="F:four-way junction DNA binding"/>
    <property type="evidence" value="ECO:0007669"/>
    <property type="project" value="UniProtKB-UniRule"/>
</dbReference>
<dbReference type="GO" id="GO:0009378">
    <property type="term" value="F:four-way junction helicase activity"/>
    <property type="evidence" value="ECO:0007669"/>
    <property type="project" value="InterPro"/>
</dbReference>
<dbReference type="GO" id="GO:0006310">
    <property type="term" value="P:DNA recombination"/>
    <property type="evidence" value="ECO:0007669"/>
    <property type="project" value="UniProtKB-UniRule"/>
</dbReference>
<dbReference type="GO" id="GO:0006281">
    <property type="term" value="P:DNA repair"/>
    <property type="evidence" value="ECO:0007669"/>
    <property type="project" value="UniProtKB-UniRule"/>
</dbReference>
<dbReference type="CDD" id="cd00009">
    <property type="entry name" value="AAA"/>
    <property type="match status" value="1"/>
</dbReference>
<dbReference type="Gene3D" id="1.10.8.60">
    <property type="match status" value="1"/>
</dbReference>
<dbReference type="Gene3D" id="3.40.50.300">
    <property type="entry name" value="P-loop containing nucleotide triphosphate hydrolases"/>
    <property type="match status" value="1"/>
</dbReference>
<dbReference type="Gene3D" id="1.10.10.10">
    <property type="entry name" value="Winged helix-like DNA-binding domain superfamily/Winged helix DNA-binding domain"/>
    <property type="match status" value="1"/>
</dbReference>
<dbReference type="HAMAP" id="MF_00016">
    <property type="entry name" value="DNA_HJ_migration_RuvB"/>
    <property type="match status" value="1"/>
</dbReference>
<dbReference type="InterPro" id="IPR003593">
    <property type="entry name" value="AAA+_ATPase"/>
</dbReference>
<dbReference type="InterPro" id="IPR041445">
    <property type="entry name" value="AAA_lid_4"/>
</dbReference>
<dbReference type="InterPro" id="IPR004605">
    <property type="entry name" value="DNA_helicase_Holl-junc_RuvB"/>
</dbReference>
<dbReference type="InterPro" id="IPR027417">
    <property type="entry name" value="P-loop_NTPase"/>
</dbReference>
<dbReference type="InterPro" id="IPR008824">
    <property type="entry name" value="RuvB-like_N"/>
</dbReference>
<dbReference type="InterPro" id="IPR008823">
    <property type="entry name" value="RuvB_C"/>
</dbReference>
<dbReference type="InterPro" id="IPR036388">
    <property type="entry name" value="WH-like_DNA-bd_sf"/>
</dbReference>
<dbReference type="InterPro" id="IPR036390">
    <property type="entry name" value="WH_DNA-bd_sf"/>
</dbReference>
<dbReference type="NCBIfam" id="NF000868">
    <property type="entry name" value="PRK00080.1"/>
    <property type="match status" value="1"/>
</dbReference>
<dbReference type="NCBIfam" id="TIGR00635">
    <property type="entry name" value="ruvB"/>
    <property type="match status" value="1"/>
</dbReference>
<dbReference type="PANTHER" id="PTHR42848">
    <property type="match status" value="1"/>
</dbReference>
<dbReference type="PANTHER" id="PTHR42848:SF1">
    <property type="entry name" value="HOLLIDAY JUNCTION BRANCH MIGRATION COMPLEX SUBUNIT RUVB"/>
    <property type="match status" value="1"/>
</dbReference>
<dbReference type="Pfam" id="PF17864">
    <property type="entry name" value="AAA_lid_4"/>
    <property type="match status" value="1"/>
</dbReference>
<dbReference type="Pfam" id="PF05491">
    <property type="entry name" value="RuvB_C"/>
    <property type="match status" value="1"/>
</dbReference>
<dbReference type="Pfam" id="PF05496">
    <property type="entry name" value="RuvB_N"/>
    <property type="match status" value="1"/>
</dbReference>
<dbReference type="SMART" id="SM00382">
    <property type="entry name" value="AAA"/>
    <property type="match status" value="1"/>
</dbReference>
<dbReference type="SUPFAM" id="SSF52540">
    <property type="entry name" value="P-loop containing nucleoside triphosphate hydrolases"/>
    <property type="match status" value="1"/>
</dbReference>
<dbReference type="SUPFAM" id="SSF46785">
    <property type="entry name" value="Winged helix' DNA-binding domain"/>
    <property type="match status" value="1"/>
</dbReference>
<reference key="1">
    <citation type="submission" date="2008-06" db="EMBL/GenBank/DDBJ databases">
        <title>Lactobacillus casei BL23 complete genome sequence.</title>
        <authorList>
            <person name="Maze A."/>
            <person name="Boel G."/>
            <person name="Bourand A."/>
            <person name="Loux V."/>
            <person name="Gibrat J.F."/>
            <person name="Zuniga M."/>
            <person name="Hartke A."/>
            <person name="Deutscher J."/>
        </authorList>
    </citation>
    <scope>NUCLEOTIDE SEQUENCE [LARGE SCALE GENOMIC DNA]</scope>
    <source>
        <strain>BL23</strain>
    </source>
</reference>
<feature type="chain" id="PRO_1000089654" description="Holliday junction branch migration complex subunit RuvB">
    <location>
        <begin position="1"/>
        <end position="338"/>
    </location>
</feature>
<feature type="region of interest" description="Large ATPase domain (RuvB-L)" evidence="1">
    <location>
        <begin position="4"/>
        <end position="187"/>
    </location>
</feature>
<feature type="region of interest" description="Small ATPAse domain (RuvB-S)" evidence="1">
    <location>
        <begin position="188"/>
        <end position="258"/>
    </location>
</feature>
<feature type="region of interest" description="Head domain (RuvB-H)" evidence="1">
    <location>
        <begin position="261"/>
        <end position="338"/>
    </location>
</feature>
<feature type="binding site" evidence="1">
    <location>
        <position position="26"/>
    </location>
    <ligand>
        <name>ATP</name>
        <dbReference type="ChEBI" id="CHEBI:30616"/>
    </ligand>
</feature>
<feature type="binding site" evidence="1">
    <location>
        <position position="27"/>
    </location>
    <ligand>
        <name>ATP</name>
        <dbReference type="ChEBI" id="CHEBI:30616"/>
    </ligand>
</feature>
<feature type="binding site" evidence="1">
    <location>
        <position position="68"/>
    </location>
    <ligand>
        <name>ATP</name>
        <dbReference type="ChEBI" id="CHEBI:30616"/>
    </ligand>
</feature>
<feature type="binding site" evidence="1">
    <location>
        <position position="71"/>
    </location>
    <ligand>
        <name>ATP</name>
        <dbReference type="ChEBI" id="CHEBI:30616"/>
    </ligand>
</feature>
<feature type="binding site" evidence="1">
    <location>
        <position position="72"/>
    </location>
    <ligand>
        <name>ATP</name>
        <dbReference type="ChEBI" id="CHEBI:30616"/>
    </ligand>
</feature>
<feature type="binding site" evidence="1">
    <location>
        <position position="72"/>
    </location>
    <ligand>
        <name>Mg(2+)</name>
        <dbReference type="ChEBI" id="CHEBI:18420"/>
    </ligand>
</feature>
<feature type="binding site" evidence="1">
    <location>
        <position position="73"/>
    </location>
    <ligand>
        <name>ATP</name>
        <dbReference type="ChEBI" id="CHEBI:30616"/>
    </ligand>
</feature>
<feature type="binding site" evidence="1">
    <location>
        <begin position="134"/>
        <end position="136"/>
    </location>
    <ligand>
        <name>ATP</name>
        <dbReference type="ChEBI" id="CHEBI:30616"/>
    </ligand>
</feature>
<feature type="binding site" evidence="1">
    <location>
        <position position="177"/>
    </location>
    <ligand>
        <name>ATP</name>
        <dbReference type="ChEBI" id="CHEBI:30616"/>
    </ligand>
</feature>
<feature type="binding site" evidence="1">
    <location>
        <position position="187"/>
    </location>
    <ligand>
        <name>ATP</name>
        <dbReference type="ChEBI" id="CHEBI:30616"/>
    </ligand>
</feature>
<feature type="binding site" evidence="1">
    <location>
        <position position="224"/>
    </location>
    <ligand>
        <name>ATP</name>
        <dbReference type="ChEBI" id="CHEBI:30616"/>
    </ligand>
</feature>
<feature type="binding site" evidence="1">
    <location>
        <position position="316"/>
    </location>
    <ligand>
        <name>DNA</name>
        <dbReference type="ChEBI" id="CHEBI:16991"/>
    </ligand>
</feature>
<feature type="binding site" evidence="1">
    <location>
        <position position="321"/>
    </location>
    <ligand>
        <name>DNA</name>
        <dbReference type="ChEBI" id="CHEBI:16991"/>
    </ligand>
</feature>
<proteinExistence type="inferred from homology"/>
<accession>B3WC56</accession>
<sequence>MADADKDRLVSGDVDDSNEAQIEKSLRPRMLAQYIGQDRVKHQLEVYITAAKQREESLDHVLLYGPPGLGKTTLALVIANELGVNIRTTSGPAIEKPGDLVALLNELHPGDVLFIDEIHRLPKIVEEMLYSAMEDFYIDIVVGQGPTAHPVHFPLPPFTLIGATTRAGMLSAPLRDRFGISEHMAYYSADDLSEIVKRSATIFDMAIDAEGAHEIARRSRGTPRVANRLLKRIRDFAEVAGQSPVDIQMVDHALDQLQVDQQGLDQIDRKLLMFMIRDYEGGPVGLSTIAANIGEEMATIEEMYEPYLLQIGYLKRTPRGRMVTPAGFAHMGMSAEQH</sequence>